<accession>A2RMN0</accession>
<accession>P42020</accession>
<accession>Q83U12</accession>
<accession>Q84BV4</accession>
<accession>Q84BV5</accession>
<name>PEPT_LACLM</name>
<feature type="chain" id="PRO_0000285236" description="Peptidase T">
    <location>
        <begin position="1"/>
        <end position="413"/>
    </location>
</feature>
<feature type="active site" evidence="1">
    <location>
        <position position="83"/>
    </location>
</feature>
<feature type="active site" description="Proton acceptor" evidence="1">
    <location>
        <position position="178"/>
    </location>
</feature>
<feature type="binding site" evidence="1">
    <location>
        <position position="81"/>
    </location>
    <ligand>
        <name>Zn(2+)</name>
        <dbReference type="ChEBI" id="CHEBI:29105"/>
        <label>1</label>
    </ligand>
</feature>
<feature type="binding site" evidence="1">
    <location>
        <position position="143"/>
    </location>
    <ligand>
        <name>Zn(2+)</name>
        <dbReference type="ChEBI" id="CHEBI:29105"/>
        <label>1</label>
    </ligand>
</feature>
<feature type="binding site" evidence="1">
    <location>
        <position position="143"/>
    </location>
    <ligand>
        <name>Zn(2+)</name>
        <dbReference type="ChEBI" id="CHEBI:29105"/>
        <label>2</label>
    </ligand>
</feature>
<feature type="binding site" evidence="1">
    <location>
        <position position="179"/>
    </location>
    <ligand>
        <name>Zn(2+)</name>
        <dbReference type="ChEBI" id="CHEBI:29105"/>
        <label>2</label>
    </ligand>
</feature>
<feature type="binding site" evidence="1">
    <location>
        <position position="201"/>
    </location>
    <ligand>
        <name>Zn(2+)</name>
        <dbReference type="ChEBI" id="CHEBI:29105"/>
        <label>1</label>
    </ligand>
</feature>
<feature type="binding site" evidence="1">
    <location>
        <position position="383"/>
    </location>
    <ligand>
        <name>Zn(2+)</name>
        <dbReference type="ChEBI" id="CHEBI:29105"/>
        <label>2</label>
    </ligand>
</feature>
<organism>
    <name type="scientific">Lactococcus lactis subsp. cremoris (strain MG1363)</name>
    <dbReference type="NCBI Taxonomy" id="416870"/>
    <lineage>
        <taxon>Bacteria</taxon>
        <taxon>Bacillati</taxon>
        <taxon>Bacillota</taxon>
        <taxon>Bacilli</taxon>
        <taxon>Lactobacillales</taxon>
        <taxon>Streptococcaceae</taxon>
        <taxon>Lactococcus</taxon>
        <taxon>Lactococcus cremoris subsp. cremoris</taxon>
    </lineage>
</organism>
<keyword id="KW-0031">Aminopeptidase</keyword>
<keyword id="KW-0963">Cytoplasm</keyword>
<keyword id="KW-0378">Hydrolase</keyword>
<keyword id="KW-0479">Metal-binding</keyword>
<keyword id="KW-0482">Metalloprotease</keyword>
<keyword id="KW-0645">Protease</keyword>
<keyword id="KW-0862">Zinc</keyword>
<gene>
    <name type="primary">pepT</name>
    <name type="ordered locus">llmg_1994</name>
</gene>
<proteinExistence type="inferred from homology"/>
<protein>
    <recommendedName>
        <fullName>Peptidase T</fullName>
        <ecNumber>3.4.11.4</ecNumber>
    </recommendedName>
    <alternativeName>
        <fullName>Aminotripeptidase</fullName>
        <shortName>Tripeptidase</shortName>
    </alternativeName>
    <alternativeName>
        <fullName>Tripeptide aminopeptidase</fullName>
    </alternativeName>
</protein>
<evidence type="ECO:0000250" key="1"/>
<evidence type="ECO:0000305" key="2"/>
<comment type="function">
    <text evidence="1">Cleaves the N-terminal amino acid of tripeptides. Has a broad specificity for tripeptides with no clear preference for a particular tripeptide. Tripeptides with proline in the second position are an exception and are not hydrolyzed. Does not hydrolyze dipeptides, tetrapeptides, or oligopeptides (By similarity).</text>
</comment>
<comment type="catalytic activity">
    <reaction>
        <text>Release of the N-terminal residue from a tripeptide.</text>
        <dbReference type="EC" id="3.4.11.4"/>
    </reaction>
</comment>
<comment type="cofactor">
    <cofactor evidence="1">
        <name>Zn(2+)</name>
        <dbReference type="ChEBI" id="CHEBI:29105"/>
    </cofactor>
    <text evidence="1">Binds 2 Zn(2+) ions per subunit.</text>
</comment>
<comment type="subunit">
    <text evidence="1">Homodimer.</text>
</comment>
<comment type="subcellular location">
    <subcellularLocation>
        <location evidence="1">Cytoplasm</location>
    </subcellularLocation>
</comment>
<comment type="similarity">
    <text evidence="2">Belongs to the peptidase M20B family.</text>
</comment>
<dbReference type="EC" id="3.4.11.4"/>
<dbReference type="EMBL" id="L27596">
    <property type="protein sequence ID" value="AAA20627.1"/>
    <property type="molecule type" value="Genomic_DNA"/>
</dbReference>
<dbReference type="EMBL" id="AM406671">
    <property type="protein sequence ID" value="CAL98564.1"/>
    <property type="molecule type" value="Genomic_DNA"/>
</dbReference>
<dbReference type="RefSeq" id="WP_011676821.1">
    <property type="nucleotide sequence ID" value="NC_009004.1"/>
</dbReference>
<dbReference type="SMR" id="A2RMN0"/>
<dbReference type="STRING" id="416870.llmg_1994"/>
<dbReference type="GeneID" id="61110139"/>
<dbReference type="KEGG" id="llm:llmg_1994"/>
<dbReference type="eggNOG" id="COG2195">
    <property type="taxonomic scope" value="Bacteria"/>
</dbReference>
<dbReference type="HOGENOM" id="CLU_053676_0_0_9"/>
<dbReference type="OrthoDB" id="9804934at2"/>
<dbReference type="PhylomeDB" id="A2RMN0"/>
<dbReference type="Proteomes" id="UP000000364">
    <property type="component" value="Chromosome"/>
</dbReference>
<dbReference type="GO" id="GO:0005829">
    <property type="term" value="C:cytosol"/>
    <property type="evidence" value="ECO:0007669"/>
    <property type="project" value="TreeGrafter"/>
</dbReference>
<dbReference type="GO" id="GO:0008237">
    <property type="term" value="F:metallopeptidase activity"/>
    <property type="evidence" value="ECO:0007669"/>
    <property type="project" value="UniProtKB-KW"/>
</dbReference>
<dbReference type="GO" id="GO:0045148">
    <property type="term" value="F:tripeptide aminopeptidase activity"/>
    <property type="evidence" value="ECO:0007669"/>
    <property type="project" value="UniProtKB-UniRule"/>
</dbReference>
<dbReference type="GO" id="GO:0008270">
    <property type="term" value="F:zinc ion binding"/>
    <property type="evidence" value="ECO:0007669"/>
    <property type="project" value="UniProtKB-UniRule"/>
</dbReference>
<dbReference type="GO" id="GO:0043171">
    <property type="term" value="P:peptide catabolic process"/>
    <property type="evidence" value="ECO:0007669"/>
    <property type="project" value="UniProtKB-UniRule"/>
</dbReference>
<dbReference type="GO" id="GO:0006508">
    <property type="term" value="P:proteolysis"/>
    <property type="evidence" value="ECO:0007669"/>
    <property type="project" value="UniProtKB-UniRule"/>
</dbReference>
<dbReference type="CDD" id="cd03892">
    <property type="entry name" value="M20_peptT"/>
    <property type="match status" value="1"/>
</dbReference>
<dbReference type="FunFam" id="3.30.70.360:FF:000002">
    <property type="entry name" value="Peptidase T"/>
    <property type="match status" value="1"/>
</dbReference>
<dbReference type="Gene3D" id="3.30.70.360">
    <property type="match status" value="1"/>
</dbReference>
<dbReference type="Gene3D" id="3.40.630.10">
    <property type="entry name" value="Zn peptidases"/>
    <property type="match status" value="1"/>
</dbReference>
<dbReference type="HAMAP" id="MF_00550">
    <property type="entry name" value="Aminopeptidase_M20"/>
    <property type="match status" value="1"/>
</dbReference>
<dbReference type="InterPro" id="IPR001261">
    <property type="entry name" value="ArgE/DapE_CS"/>
</dbReference>
<dbReference type="InterPro" id="IPR036264">
    <property type="entry name" value="Bact_exopeptidase_dim_dom"/>
</dbReference>
<dbReference type="InterPro" id="IPR002933">
    <property type="entry name" value="Peptidase_M20"/>
</dbReference>
<dbReference type="InterPro" id="IPR011650">
    <property type="entry name" value="Peptidase_M20_dimer"/>
</dbReference>
<dbReference type="InterPro" id="IPR010161">
    <property type="entry name" value="Peptidase_M20B"/>
</dbReference>
<dbReference type="NCBIfam" id="TIGR01882">
    <property type="entry name" value="peptidase-T"/>
    <property type="match status" value="1"/>
</dbReference>
<dbReference type="NCBIfam" id="NF003976">
    <property type="entry name" value="PRK05469.1"/>
    <property type="match status" value="1"/>
</dbReference>
<dbReference type="NCBIfam" id="NF009920">
    <property type="entry name" value="PRK13381.1"/>
    <property type="match status" value="1"/>
</dbReference>
<dbReference type="PANTHER" id="PTHR42994">
    <property type="entry name" value="PEPTIDASE T"/>
    <property type="match status" value="1"/>
</dbReference>
<dbReference type="PANTHER" id="PTHR42994:SF1">
    <property type="entry name" value="PEPTIDASE T"/>
    <property type="match status" value="1"/>
</dbReference>
<dbReference type="Pfam" id="PF07687">
    <property type="entry name" value="M20_dimer"/>
    <property type="match status" value="1"/>
</dbReference>
<dbReference type="Pfam" id="PF01546">
    <property type="entry name" value="Peptidase_M20"/>
    <property type="match status" value="1"/>
</dbReference>
<dbReference type="PIRSF" id="PIRSF037215">
    <property type="entry name" value="Peptidase_M20B"/>
    <property type="match status" value="1"/>
</dbReference>
<dbReference type="SUPFAM" id="SSF55031">
    <property type="entry name" value="Bacterial exopeptidase dimerisation domain"/>
    <property type="match status" value="1"/>
</dbReference>
<dbReference type="SUPFAM" id="SSF53187">
    <property type="entry name" value="Zn-dependent exopeptidases"/>
    <property type="match status" value="1"/>
</dbReference>
<dbReference type="PROSITE" id="PS00758">
    <property type="entry name" value="ARGE_DAPE_CPG2_1"/>
    <property type="match status" value="1"/>
</dbReference>
<dbReference type="PROSITE" id="PS00759">
    <property type="entry name" value="ARGE_DAPE_CPG2_2"/>
    <property type="match status" value="1"/>
</dbReference>
<reference key="1">
    <citation type="journal article" date="1994" name="J. Bacteriol.">
        <title>Tripeptidase gene (pepT) of Lactococcus lactis: molecular cloning and nucleotide sequencing of pepT and construction of a chromosomal deletion mutant.</title>
        <authorList>
            <person name="Mierau I."/>
            <person name="Haandrikman A.J."/>
            <person name="Velterop O."/>
            <person name="Tan P.S.T."/>
            <person name="Leenhouts K.L."/>
            <person name="Konings W.N."/>
            <person name="Venema G."/>
            <person name="Kok J."/>
        </authorList>
    </citation>
    <scope>NUCLEOTIDE SEQUENCE [GENOMIC DNA]</scope>
</reference>
<reference key="2">
    <citation type="journal article" date="2007" name="J. Bacteriol.">
        <title>The complete genome sequence of the lactic acid bacterial paradigm Lactococcus lactis subsp. cremoris MG1363.</title>
        <authorList>
            <person name="Wegmann U."/>
            <person name="O'Connell-Motherway M."/>
            <person name="Zomer A."/>
            <person name="Buist G."/>
            <person name="Shearman C."/>
            <person name="Canchaya C."/>
            <person name="Ventura M."/>
            <person name="Goesmann A."/>
            <person name="Gasson M.J."/>
            <person name="Kuipers O.P."/>
            <person name="van Sinderen D."/>
            <person name="Kok J."/>
        </authorList>
    </citation>
    <scope>NUCLEOTIDE SEQUENCE [LARGE SCALE GENOMIC DNA]</scope>
    <source>
        <strain>MG1363</strain>
    </source>
</reference>
<sequence length="413" mass="45946">MKYEKLLPRFLEYVKVNTRSDENSTTTPSTQALVEFAHKMGEDMKALGLKDVHYLESNGYVIGTIPANTDKKVRKIGLLAHLDTADFNAEGVNPQILENYDGESVIQLGDTEFTLDPKDFPNLKNYKGQTLVHTDGTTLLGSDDKSGVAEIMTLADYLLNINPDFEHGEIRVGFGPDEEIGVGADKFDVADFDVDFAYTVDGGPLGELQYETFSAAGAVIEFQGKNVHPGTAKNMMVNALQLAIDYHNALPEFDRPEKTEGREGFFHLLKLDGTPEEARAQYIIRDHEEGKFNERKALMQEIADKMNAELGQNRVKPVIKDQYYNMAQIIEKDMSIIDIAKKAMENLDIAPIIEPIRGGTDGSKISFMGLPTPNLFAGGENMHGRFEFVSVQTMEKAVDTLLEIIRLNNEVAK</sequence>